<feature type="chain" id="PRO_0000118421" description="NADH-ubiquinone oxidoreductase chain 4L">
    <location>
        <begin position="1"/>
        <end position="98"/>
    </location>
</feature>
<feature type="transmembrane region" description="Helical" evidence="3">
    <location>
        <begin position="1"/>
        <end position="21"/>
    </location>
</feature>
<feature type="transmembrane region" description="Helical" evidence="3">
    <location>
        <begin position="29"/>
        <end position="49"/>
    </location>
</feature>
<feature type="transmembrane region" description="Helical" evidence="3">
    <location>
        <begin position="61"/>
        <end position="81"/>
    </location>
</feature>
<geneLocation type="mitochondrion"/>
<dbReference type="EC" id="7.1.1.2"/>
<dbReference type="EMBL" id="AJ428578">
    <property type="protein sequence ID" value="CAD21740.1"/>
    <property type="molecule type" value="Genomic_DNA"/>
</dbReference>
<dbReference type="RefSeq" id="NP_659358.1">
    <property type="nucleotide sequence ID" value="NC_004030.2"/>
</dbReference>
<dbReference type="SMR" id="Q8LX40"/>
<dbReference type="GeneID" id="805012"/>
<dbReference type="KEGG" id="eju:805012"/>
<dbReference type="CTD" id="4539"/>
<dbReference type="OrthoDB" id="19063at33554"/>
<dbReference type="GO" id="GO:0005743">
    <property type="term" value="C:mitochondrial inner membrane"/>
    <property type="evidence" value="ECO:0000250"/>
    <property type="project" value="UniProtKB"/>
</dbReference>
<dbReference type="GO" id="GO:0045271">
    <property type="term" value="C:respiratory chain complex I"/>
    <property type="evidence" value="ECO:0000250"/>
    <property type="project" value="UniProtKB"/>
</dbReference>
<dbReference type="GO" id="GO:0008137">
    <property type="term" value="F:NADH dehydrogenase (ubiquinone) activity"/>
    <property type="evidence" value="ECO:0000250"/>
    <property type="project" value="UniProtKB"/>
</dbReference>
<dbReference type="GO" id="GO:0042773">
    <property type="term" value="P:ATP synthesis coupled electron transport"/>
    <property type="evidence" value="ECO:0007669"/>
    <property type="project" value="InterPro"/>
</dbReference>
<dbReference type="FunFam" id="1.10.287.3510:FF:000002">
    <property type="entry name" value="NADH-ubiquinone oxidoreductase chain 4L"/>
    <property type="match status" value="1"/>
</dbReference>
<dbReference type="Gene3D" id="1.10.287.3510">
    <property type="match status" value="1"/>
</dbReference>
<dbReference type="InterPro" id="IPR001133">
    <property type="entry name" value="NADH_UbQ_OxRdtase_chain4L/K"/>
</dbReference>
<dbReference type="InterPro" id="IPR039428">
    <property type="entry name" value="NUOK/Mnh_C1-like"/>
</dbReference>
<dbReference type="PANTHER" id="PTHR11434:SF0">
    <property type="entry name" value="NADH-UBIQUINONE OXIDOREDUCTASE CHAIN 4L"/>
    <property type="match status" value="1"/>
</dbReference>
<dbReference type="PANTHER" id="PTHR11434">
    <property type="entry name" value="NADH-UBIQUINONE OXIDOREDUCTASE SUBUNIT ND4L"/>
    <property type="match status" value="1"/>
</dbReference>
<dbReference type="Pfam" id="PF00420">
    <property type="entry name" value="Oxidored_q2"/>
    <property type="match status" value="1"/>
</dbReference>
<evidence type="ECO:0000250" key="1">
    <source>
        <dbReference type="UniProtKB" id="P03901"/>
    </source>
</evidence>
<evidence type="ECO:0000250" key="2">
    <source>
        <dbReference type="UniProtKB" id="P03902"/>
    </source>
</evidence>
<evidence type="ECO:0000255" key="3"/>
<evidence type="ECO:0000305" key="4"/>
<keyword id="KW-0249">Electron transport</keyword>
<keyword id="KW-0472">Membrane</keyword>
<keyword id="KW-0496">Mitochondrion</keyword>
<keyword id="KW-0999">Mitochondrion inner membrane</keyword>
<keyword id="KW-0520">NAD</keyword>
<keyword id="KW-0679">Respiratory chain</keyword>
<keyword id="KW-1278">Translocase</keyword>
<keyword id="KW-0812">Transmembrane</keyword>
<keyword id="KW-1133">Transmembrane helix</keyword>
<keyword id="KW-0813">Transport</keyword>
<keyword id="KW-0830">Ubiquinone</keyword>
<protein>
    <recommendedName>
        <fullName>NADH-ubiquinone oxidoreductase chain 4L</fullName>
        <ecNumber>7.1.1.2</ecNumber>
    </recommendedName>
    <alternativeName>
        <fullName>NADH dehydrogenase subunit 4L</fullName>
    </alternativeName>
</protein>
<accession>Q8LX40</accession>
<name>NU4LM_EUMJU</name>
<organism>
    <name type="scientific">Eumetopias jubatus</name>
    <name type="common">Steller sea lion</name>
    <name type="synonym">Phoca jubata</name>
    <dbReference type="NCBI Taxonomy" id="34886"/>
    <lineage>
        <taxon>Eukaryota</taxon>
        <taxon>Metazoa</taxon>
        <taxon>Chordata</taxon>
        <taxon>Craniata</taxon>
        <taxon>Vertebrata</taxon>
        <taxon>Euteleostomi</taxon>
        <taxon>Mammalia</taxon>
        <taxon>Eutheria</taxon>
        <taxon>Laurasiatheria</taxon>
        <taxon>Carnivora</taxon>
        <taxon>Caniformia</taxon>
        <taxon>Pinnipedia</taxon>
        <taxon>Otariidae</taxon>
        <taxon>Eumetopias</taxon>
    </lineage>
</organism>
<comment type="function">
    <text evidence="1">Core subunit of the mitochondrial membrane respiratory chain NADH dehydrogenase (Complex I) which catalyzes electron transfer from NADH through the respiratory chain, using ubiquinone as an electron acceptor. Part of the enzyme membrane arm which is embedded in the lipid bilayer and involved in proton translocation.</text>
</comment>
<comment type="catalytic activity">
    <reaction evidence="1">
        <text>a ubiquinone + NADH + 5 H(+)(in) = a ubiquinol + NAD(+) + 4 H(+)(out)</text>
        <dbReference type="Rhea" id="RHEA:29091"/>
        <dbReference type="Rhea" id="RHEA-COMP:9565"/>
        <dbReference type="Rhea" id="RHEA-COMP:9566"/>
        <dbReference type="ChEBI" id="CHEBI:15378"/>
        <dbReference type="ChEBI" id="CHEBI:16389"/>
        <dbReference type="ChEBI" id="CHEBI:17976"/>
        <dbReference type="ChEBI" id="CHEBI:57540"/>
        <dbReference type="ChEBI" id="CHEBI:57945"/>
        <dbReference type="EC" id="7.1.1.2"/>
    </reaction>
    <physiologicalReaction direction="left-to-right" evidence="1">
        <dbReference type="Rhea" id="RHEA:29092"/>
    </physiologicalReaction>
</comment>
<comment type="subunit">
    <text evidence="2">Core subunit of respiratory chain NADH dehydrogenase (Complex I) which is composed of 45 different subunits.</text>
</comment>
<comment type="subcellular location">
    <subcellularLocation>
        <location evidence="2">Mitochondrion inner membrane</location>
        <topology evidence="3">Multi-pass membrane protein</topology>
    </subcellularLocation>
</comment>
<comment type="similarity">
    <text evidence="4">Belongs to the complex I subunit 4L family.</text>
</comment>
<sequence length="98" mass="10870">MSMVYFNILMAFIVSFVGLLMYRSHLMSSLLCLEGMMLSLFVMMSVTILNNHFTLASMAPIILLVFAACEAALGLSLLVMVSNTYGTDYVQNLNLLQC</sequence>
<proteinExistence type="inferred from homology"/>
<reference key="1">
    <citation type="journal article" date="2002" name="Proc. Natl. Acad. Sci. U.S.A.">
        <title>Mammalian mitogenomic relationships and the root of the eutherian tree.</title>
        <authorList>
            <person name="Arnason U."/>
            <person name="Adegoke J.A."/>
            <person name="Bodin K."/>
            <person name="Born E.W."/>
            <person name="Esa Y.B."/>
            <person name="Gullberg A."/>
            <person name="Nilsson M."/>
            <person name="Short R.V."/>
            <person name="Xu X."/>
            <person name="Janke A."/>
        </authorList>
    </citation>
    <scope>NUCLEOTIDE SEQUENCE [GENOMIC DNA]</scope>
</reference>
<gene>
    <name type="primary">MT-ND4L</name>
    <name type="synonym">MTND4L</name>
    <name type="synonym">NADH4L</name>
    <name type="synonym">ND4L</name>
</gene>